<protein>
    <recommendedName>
        <fullName evidence="1">Lipoyl synthase</fullName>
        <ecNumber evidence="1">2.8.1.8</ecNumber>
    </recommendedName>
    <alternativeName>
        <fullName evidence="1">Lip-syn</fullName>
        <shortName evidence="1">LS</shortName>
    </alternativeName>
    <alternativeName>
        <fullName evidence="1">Lipoate synthase</fullName>
    </alternativeName>
    <alternativeName>
        <fullName evidence="1">Lipoic acid synthase</fullName>
    </alternativeName>
    <alternativeName>
        <fullName evidence="1">Sulfur insertion protein LipA</fullName>
    </alternativeName>
</protein>
<organism>
    <name type="scientific">Sphingopyxis alaskensis (strain DSM 13593 / LMG 18877 / RB2256)</name>
    <name type="common">Sphingomonas alaskensis</name>
    <dbReference type="NCBI Taxonomy" id="317655"/>
    <lineage>
        <taxon>Bacteria</taxon>
        <taxon>Pseudomonadati</taxon>
        <taxon>Pseudomonadota</taxon>
        <taxon>Alphaproteobacteria</taxon>
        <taxon>Sphingomonadales</taxon>
        <taxon>Sphingomonadaceae</taxon>
        <taxon>Sphingopyxis</taxon>
    </lineage>
</organism>
<name>LIPA_SPHAL</name>
<evidence type="ECO:0000255" key="1">
    <source>
        <dbReference type="HAMAP-Rule" id="MF_00206"/>
    </source>
</evidence>
<evidence type="ECO:0000255" key="2">
    <source>
        <dbReference type="PROSITE-ProRule" id="PRU01266"/>
    </source>
</evidence>
<feature type="chain" id="PRO_0000325312" description="Lipoyl synthase">
    <location>
        <begin position="1"/>
        <end position="311"/>
    </location>
</feature>
<feature type="domain" description="Radical SAM core" evidence="2">
    <location>
        <begin position="59"/>
        <end position="276"/>
    </location>
</feature>
<feature type="binding site" evidence="1">
    <location>
        <position position="47"/>
    </location>
    <ligand>
        <name>[4Fe-4S] cluster</name>
        <dbReference type="ChEBI" id="CHEBI:49883"/>
        <label>1</label>
    </ligand>
</feature>
<feature type="binding site" evidence="1">
    <location>
        <position position="52"/>
    </location>
    <ligand>
        <name>[4Fe-4S] cluster</name>
        <dbReference type="ChEBI" id="CHEBI:49883"/>
        <label>1</label>
    </ligand>
</feature>
<feature type="binding site" evidence="1">
    <location>
        <position position="58"/>
    </location>
    <ligand>
        <name>[4Fe-4S] cluster</name>
        <dbReference type="ChEBI" id="CHEBI:49883"/>
        <label>1</label>
    </ligand>
</feature>
<feature type="binding site" evidence="1">
    <location>
        <position position="73"/>
    </location>
    <ligand>
        <name>[4Fe-4S] cluster</name>
        <dbReference type="ChEBI" id="CHEBI:49883"/>
        <label>2</label>
        <note>4Fe-4S-S-AdoMet</note>
    </ligand>
</feature>
<feature type="binding site" evidence="1">
    <location>
        <position position="77"/>
    </location>
    <ligand>
        <name>[4Fe-4S] cluster</name>
        <dbReference type="ChEBI" id="CHEBI:49883"/>
        <label>2</label>
        <note>4Fe-4S-S-AdoMet</note>
    </ligand>
</feature>
<feature type="binding site" evidence="1">
    <location>
        <position position="80"/>
    </location>
    <ligand>
        <name>[4Fe-4S] cluster</name>
        <dbReference type="ChEBI" id="CHEBI:49883"/>
        <label>2</label>
        <note>4Fe-4S-S-AdoMet</note>
    </ligand>
</feature>
<feature type="binding site" evidence="1">
    <location>
        <position position="287"/>
    </location>
    <ligand>
        <name>[4Fe-4S] cluster</name>
        <dbReference type="ChEBI" id="CHEBI:49883"/>
        <label>1</label>
    </ligand>
</feature>
<gene>
    <name evidence="1" type="primary">lipA</name>
    <name type="ordered locus">Sala_1281</name>
</gene>
<comment type="function">
    <text evidence="1">Catalyzes the radical-mediated insertion of two sulfur atoms into the C-6 and C-8 positions of the octanoyl moiety bound to the lipoyl domains of lipoate-dependent enzymes, thereby converting the octanoylated domains into lipoylated derivatives.</text>
</comment>
<comment type="catalytic activity">
    <reaction evidence="1">
        <text>[[Fe-S] cluster scaffold protein carrying a second [4Fe-4S](2+) cluster] + N(6)-octanoyl-L-lysyl-[protein] + 2 oxidized [2Fe-2S]-[ferredoxin] + 2 S-adenosyl-L-methionine + 4 H(+) = [[Fe-S] cluster scaffold protein] + N(6)-[(R)-dihydrolipoyl]-L-lysyl-[protein] + 4 Fe(3+) + 2 hydrogen sulfide + 2 5'-deoxyadenosine + 2 L-methionine + 2 reduced [2Fe-2S]-[ferredoxin]</text>
        <dbReference type="Rhea" id="RHEA:16585"/>
        <dbReference type="Rhea" id="RHEA-COMP:9928"/>
        <dbReference type="Rhea" id="RHEA-COMP:10000"/>
        <dbReference type="Rhea" id="RHEA-COMP:10001"/>
        <dbReference type="Rhea" id="RHEA-COMP:10475"/>
        <dbReference type="Rhea" id="RHEA-COMP:14568"/>
        <dbReference type="Rhea" id="RHEA-COMP:14569"/>
        <dbReference type="ChEBI" id="CHEBI:15378"/>
        <dbReference type="ChEBI" id="CHEBI:17319"/>
        <dbReference type="ChEBI" id="CHEBI:29034"/>
        <dbReference type="ChEBI" id="CHEBI:29919"/>
        <dbReference type="ChEBI" id="CHEBI:33722"/>
        <dbReference type="ChEBI" id="CHEBI:33737"/>
        <dbReference type="ChEBI" id="CHEBI:33738"/>
        <dbReference type="ChEBI" id="CHEBI:57844"/>
        <dbReference type="ChEBI" id="CHEBI:59789"/>
        <dbReference type="ChEBI" id="CHEBI:78809"/>
        <dbReference type="ChEBI" id="CHEBI:83100"/>
        <dbReference type="EC" id="2.8.1.8"/>
    </reaction>
</comment>
<comment type="cofactor">
    <cofactor evidence="1">
        <name>[4Fe-4S] cluster</name>
        <dbReference type="ChEBI" id="CHEBI:49883"/>
    </cofactor>
    <text evidence="1">Binds 2 [4Fe-4S] clusters per subunit. One cluster is coordinated with 3 cysteines and an exchangeable S-adenosyl-L-methionine.</text>
</comment>
<comment type="pathway">
    <text evidence="1">Protein modification; protein lipoylation via endogenous pathway; protein N(6)-(lipoyl)lysine from octanoyl-[acyl-carrier-protein]: step 2/2.</text>
</comment>
<comment type="subcellular location">
    <subcellularLocation>
        <location evidence="1">Cytoplasm</location>
    </subcellularLocation>
</comment>
<comment type="similarity">
    <text evidence="1">Belongs to the radical SAM superfamily. Lipoyl synthase family.</text>
</comment>
<keyword id="KW-0004">4Fe-4S</keyword>
<keyword id="KW-0963">Cytoplasm</keyword>
<keyword id="KW-0408">Iron</keyword>
<keyword id="KW-0411">Iron-sulfur</keyword>
<keyword id="KW-0479">Metal-binding</keyword>
<keyword id="KW-1185">Reference proteome</keyword>
<keyword id="KW-0949">S-adenosyl-L-methionine</keyword>
<keyword id="KW-0808">Transferase</keyword>
<sequence>MNAPASPAASPSQRARKPDWIRVKAPTSPGYAETRKLMRELNLHTVCEEAACPNIGECWTKKHATVMILGDTCTRACAFCNVKTGMPRPVDLLEPEHTAIAAAKMGLSHIVITSVDRDDLPDGGASQFVKVINALRRETPQTTIEILTPDFRNKPESAVAAIVDARPDVYNHNLETVPRLYPTIRPGARYYASLRLLESVKRRDPSIFTKSGIMLGLGEERMEVHQVMDDMRSADIDFMTMGQYLQPTPKHAKVIDFVTPQAFDAYAQIARAKGFLQVASSPLTRSSYHAGDDFEHMRAAREAQLARVRAD</sequence>
<reference key="1">
    <citation type="journal article" date="2009" name="Proc. Natl. Acad. Sci. U.S.A.">
        <title>The genomic basis of trophic strategy in marine bacteria.</title>
        <authorList>
            <person name="Lauro F.M."/>
            <person name="McDougald D."/>
            <person name="Thomas T."/>
            <person name="Williams T.J."/>
            <person name="Egan S."/>
            <person name="Rice S."/>
            <person name="DeMaere M.Z."/>
            <person name="Ting L."/>
            <person name="Ertan H."/>
            <person name="Johnson J."/>
            <person name="Ferriera S."/>
            <person name="Lapidus A."/>
            <person name="Anderson I."/>
            <person name="Kyrpides N."/>
            <person name="Munk A.C."/>
            <person name="Detter C."/>
            <person name="Han C.S."/>
            <person name="Brown M.V."/>
            <person name="Robb F.T."/>
            <person name="Kjelleberg S."/>
            <person name="Cavicchioli R."/>
        </authorList>
    </citation>
    <scope>NUCLEOTIDE SEQUENCE [LARGE SCALE GENOMIC DNA]</scope>
    <source>
        <strain>DSM 13593 / LMG 18877 / RB2256</strain>
    </source>
</reference>
<proteinExistence type="inferred from homology"/>
<dbReference type="EC" id="2.8.1.8" evidence="1"/>
<dbReference type="EMBL" id="CP000356">
    <property type="protein sequence ID" value="ABF52995.1"/>
    <property type="molecule type" value="Genomic_DNA"/>
</dbReference>
<dbReference type="RefSeq" id="WP_011541578.1">
    <property type="nucleotide sequence ID" value="NC_008048.1"/>
</dbReference>
<dbReference type="SMR" id="Q1GTM7"/>
<dbReference type="STRING" id="317655.Sala_1281"/>
<dbReference type="KEGG" id="sal:Sala_1281"/>
<dbReference type="eggNOG" id="COG0320">
    <property type="taxonomic scope" value="Bacteria"/>
</dbReference>
<dbReference type="HOGENOM" id="CLU_033144_2_1_5"/>
<dbReference type="OrthoDB" id="9787898at2"/>
<dbReference type="UniPathway" id="UPA00538">
    <property type="reaction ID" value="UER00593"/>
</dbReference>
<dbReference type="Proteomes" id="UP000006578">
    <property type="component" value="Chromosome"/>
</dbReference>
<dbReference type="GO" id="GO:0005737">
    <property type="term" value="C:cytoplasm"/>
    <property type="evidence" value="ECO:0007669"/>
    <property type="project" value="UniProtKB-SubCell"/>
</dbReference>
<dbReference type="GO" id="GO:0051539">
    <property type="term" value="F:4 iron, 4 sulfur cluster binding"/>
    <property type="evidence" value="ECO:0007669"/>
    <property type="project" value="UniProtKB-UniRule"/>
</dbReference>
<dbReference type="GO" id="GO:0016992">
    <property type="term" value="F:lipoate synthase activity"/>
    <property type="evidence" value="ECO:0007669"/>
    <property type="project" value="UniProtKB-UniRule"/>
</dbReference>
<dbReference type="GO" id="GO:0046872">
    <property type="term" value="F:metal ion binding"/>
    <property type="evidence" value="ECO:0007669"/>
    <property type="project" value="UniProtKB-KW"/>
</dbReference>
<dbReference type="CDD" id="cd01335">
    <property type="entry name" value="Radical_SAM"/>
    <property type="match status" value="1"/>
</dbReference>
<dbReference type="FunFam" id="3.20.20.70:FF:000040">
    <property type="entry name" value="Lipoyl synthase"/>
    <property type="match status" value="1"/>
</dbReference>
<dbReference type="Gene3D" id="3.20.20.70">
    <property type="entry name" value="Aldolase class I"/>
    <property type="match status" value="1"/>
</dbReference>
<dbReference type="HAMAP" id="MF_00206">
    <property type="entry name" value="Lipoyl_synth"/>
    <property type="match status" value="1"/>
</dbReference>
<dbReference type="InterPro" id="IPR013785">
    <property type="entry name" value="Aldolase_TIM"/>
</dbReference>
<dbReference type="InterPro" id="IPR006638">
    <property type="entry name" value="Elp3/MiaA/NifB-like_rSAM"/>
</dbReference>
<dbReference type="InterPro" id="IPR031691">
    <property type="entry name" value="LIAS_N"/>
</dbReference>
<dbReference type="InterPro" id="IPR003698">
    <property type="entry name" value="Lipoyl_synth"/>
</dbReference>
<dbReference type="InterPro" id="IPR007197">
    <property type="entry name" value="rSAM"/>
</dbReference>
<dbReference type="NCBIfam" id="TIGR00510">
    <property type="entry name" value="lipA"/>
    <property type="match status" value="1"/>
</dbReference>
<dbReference type="NCBIfam" id="NF004019">
    <property type="entry name" value="PRK05481.1"/>
    <property type="match status" value="1"/>
</dbReference>
<dbReference type="NCBIfam" id="NF009544">
    <property type="entry name" value="PRK12928.1"/>
    <property type="match status" value="1"/>
</dbReference>
<dbReference type="PANTHER" id="PTHR10949">
    <property type="entry name" value="LIPOYL SYNTHASE"/>
    <property type="match status" value="1"/>
</dbReference>
<dbReference type="PANTHER" id="PTHR10949:SF0">
    <property type="entry name" value="LIPOYL SYNTHASE, MITOCHONDRIAL"/>
    <property type="match status" value="1"/>
</dbReference>
<dbReference type="Pfam" id="PF16881">
    <property type="entry name" value="LIAS_N"/>
    <property type="match status" value="1"/>
</dbReference>
<dbReference type="Pfam" id="PF04055">
    <property type="entry name" value="Radical_SAM"/>
    <property type="match status" value="1"/>
</dbReference>
<dbReference type="PIRSF" id="PIRSF005963">
    <property type="entry name" value="Lipoyl_synth"/>
    <property type="match status" value="1"/>
</dbReference>
<dbReference type="SFLD" id="SFLDF00271">
    <property type="entry name" value="lipoyl_synthase"/>
    <property type="match status" value="1"/>
</dbReference>
<dbReference type="SFLD" id="SFLDG01058">
    <property type="entry name" value="lipoyl_synthase_like"/>
    <property type="match status" value="1"/>
</dbReference>
<dbReference type="SMART" id="SM00729">
    <property type="entry name" value="Elp3"/>
    <property type="match status" value="1"/>
</dbReference>
<dbReference type="SUPFAM" id="SSF102114">
    <property type="entry name" value="Radical SAM enzymes"/>
    <property type="match status" value="1"/>
</dbReference>
<dbReference type="PROSITE" id="PS51918">
    <property type="entry name" value="RADICAL_SAM"/>
    <property type="match status" value="1"/>
</dbReference>
<accession>Q1GTM7</accession>